<organism>
    <name type="scientific">Cryptococcus neoformans var. neoformans serotype D (strain B-3501A)</name>
    <name type="common">Filobasidiella neoformans</name>
    <dbReference type="NCBI Taxonomy" id="283643"/>
    <lineage>
        <taxon>Eukaryota</taxon>
        <taxon>Fungi</taxon>
        <taxon>Dikarya</taxon>
        <taxon>Basidiomycota</taxon>
        <taxon>Agaricomycotina</taxon>
        <taxon>Tremellomycetes</taxon>
        <taxon>Tremellales</taxon>
        <taxon>Cryptococcaceae</taxon>
        <taxon>Cryptococcus</taxon>
        <taxon>Cryptococcus neoformans species complex</taxon>
    </lineage>
</organism>
<name>PPIH_CRYNB</name>
<reference key="1">
    <citation type="journal article" date="2005" name="Science">
        <title>The genome of the basidiomycetous yeast and human pathogen Cryptococcus neoformans.</title>
        <authorList>
            <person name="Loftus B.J."/>
            <person name="Fung E."/>
            <person name="Roncaglia P."/>
            <person name="Rowley D."/>
            <person name="Amedeo P."/>
            <person name="Bruno D."/>
            <person name="Vamathevan J."/>
            <person name="Miranda M."/>
            <person name="Anderson I.J."/>
            <person name="Fraser J.A."/>
            <person name="Allen J.E."/>
            <person name="Bosdet I.E."/>
            <person name="Brent M.R."/>
            <person name="Chiu R."/>
            <person name="Doering T.L."/>
            <person name="Donlin M.J."/>
            <person name="D'Souza C.A."/>
            <person name="Fox D.S."/>
            <person name="Grinberg V."/>
            <person name="Fu J."/>
            <person name="Fukushima M."/>
            <person name="Haas B.J."/>
            <person name="Huang J.C."/>
            <person name="Janbon G."/>
            <person name="Jones S.J.M."/>
            <person name="Koo H.L."/>
            <person name="Krzywinski M.I."/>
            <person name="Kwon-Chung K.J."/>
            <person name="Lengeler K.B."/>
            <person name="Maiti R."/>
            <person name="Marra M.A."/>
            <person name="Marra R.E."/>
            <person name="Mathewson C.A."/>
            <person name="Mitchell T.G."/>
            <person name="Pertea M."/>
            <person name="Riggs F.R."/>
            <person name="Salzberg S.L."/>
            <person name="Schein J.E."/>
            <person name="Shvartsbeyn A."/>
            <person name="Shin H."/>
            <person name="Shumway M."/>
            <person name="Specht C.A."/>
            <person name="Suh B.B."/>
            <person name="Tenney A."/>
            <person name="Utterback T.R."/>
            <person name="Wickes B.L."/>
            <person name="Wortman J.R."/>
            <person name="Wye N.H."/>
            <person name="Kronstad J.W."/>
            <person name="Lodge J.K."/>
            <person name="Heitman J."/>
            <person name="Davis R.W."/>
            <person name="Fraser C.M."/>
            <person name="Hyman R.W."/>
        </authorList>
    </citation>
    <scope>NUCLEOTIDE SEQUENCE [LARGE SCALE GENOMIC DNA]</scope>
    <source>
        <strain>B-3501A</strain>
    </source>
</reference>
<sequence>MSSIDPPAGHTRPIVFFDISIGDTPAGRIKMELFDDITPKTAENFRQLCTGEHRINSVPQGYKKATFHRVIPQFMVQGGDFVRGDGTGSFSIYGAQFEDENFKVKHTGPGLLSMANSGPNTNGCQFFITTAPAEFLDGKHCVFGRVIDGLLTVRKIENVPTGANNRPKLQVRIAECGEM</sequence>
<comment type="function">
    <text evidence="1">PPIases accelerate the folding of proteins. It catalyzes the cis-trans isomerization of proline imidic peptide bonds in oligopeptides (By similarity).</text>
</comment>
<comment type="catalytic activity">
    <reaction>
        <text>[protein]-peptidylproline (omega=180) = [protein]-peptidylproline (omega=0)</text>
        <dbReference type="Rhea" id="RHEA:16237"/>
        <dbReference type="Rhea" id="RHEA-COMP:10747"/>
        <dbReference type="Rhea" id="RHEA-COMP:10748"/>
        <dbReference type="ChEBI" id="CHEBI:83833"/>
        <dbReference type="ChEBI" id="CHEBI:83834"/>
        <dbReference type="EC" id="5.2.1.8"/>
    </reaction>
</comment>
<comment type="subcellular location">
    <subcellularLocation>
        <location evidence="1">Nucleus</location>
    </subcellularLocation>
</comment>
<comment type="similarity">
    <text evidence="3">Belongs to the cyclophilin-type PPIase family. PPIase H subfamily.</text>
</comment>
<evidence type="ECO:0000250" key="1"/>
<evidence type="ECO:0000255" key="2">
    <source>
        <dbReference type="PROSITE-ProRule" id="PRU00156"/>
    </source>
</evidence>
<evidence type="ECO:0000305" key="3"/>
<dbReference type="EC" id="5.2.1.8"/>
<dbReference type="EMBL" id="AAEY01000049">
    <property type="protein sequence ID" value="EAL18455.1"/>
    <property type="molecule type" value="Genomic_DNA"/>
</dbReference>
<dbReference type="RefSeq" id="XP_773102.1">
    <property type="nucleotide sequence ID" value="XM_768009.1"/>
</dbReference>
<dbReference type="SMR" id="P0CP83"/>
<dbReference type="EnsemblFungi" id="AAW46023">
    <property type="protein sequence ID" value="AAW46023"/>
    <property type="gene ID" value="CNJ02490"/>
</dbReference>
<dbReference type="GeneID" id="4938437"/>
<dbReference type="KEGG" id="cnb:CNBJ0970"/>
<dbReference type="VEuPathDB" id="FungiDB:CNBJ0970"/>
<dbReference type="HOGENOM" id="CLU_012062_4_3_1"/>
<dbReference type="GO" id="GO:0005737">
    <property type="term" value="C:cytoplasm"/>
    <property type="evidence" value="ECO:0007669"/>
    <property type="project" value="TreeGrafter"/>
</dbReference>
<dbReference type="GO" id="GO:0005634">
    <property type="term" value="C:nucleus"/>
    <property type="evidence" value="ECO:0007669"/>
    <property type="project" value="UniProtKB-SubCell"/>
</dbReference>
<dbReference type="GO" id="GO:0016018">
    <property type="term" value="F:cyclosporin A binding"/>
    <property type="evidence" value="ECO:0007669"/>
    <property type="project" value="TreeGrafter"/>
</dbReference>
<dbReference type="GO" id="GO:0003755">
    <property type="term" value="F:peptidyl-prolyl cis-trans isomerase activity"/>
    <property type="evidence" value="ECO:0007669"/>
    <property type="project" value="UniProtKB-KW"/>
</dbReference>
<dbReference type="GO" id="GO:0006457">
    <property type="term" value="P:protein folding"/>
    <property type="evidence" value="ECO:0007669"/>
    <property type="project" value="InterPro"/>
</dbReference>
<dbReference type="CDD" id="cd01926">
    <property type="entry name" value="cyclophilin_ABH_like"/>
    <property type="match status" value="1"/>
</dbReference>
<dbReference type="FunFam" id="2.40.100.10:FF:000039">
    <property type="entry name" value="Peptidyl-prolyl cis-trans isomerase"/>
    <property type="match status" value="1"/>
</dbReference>
<dbReference type="Gene3D" id="2.40.100.10">
    <property type="entry name" value="Cyclophilin-like"/>
    <property type="match status" value="1"/>
</dbReference>
<dbReference type="InterPro" id="IPR029000">
    <property type="entry name" value="Cyclophilin-like_dom_sf"/>
</dbReference>
<dbReference type="InterPro" id="IPR024936">
    <property type="entry name" value="Cyclophilin-type_PPIase"/>
</dbReference>
<dbReference type="InterPro" id="IPR020892">
    <property type="entry name" value="Cyclophilin-type_PPIase_CS"/>
</dbReference>
<dbReference type="InterPro" id="IPR002130">
    <property type="entry name" value="Cyclophilin-type_PPIase_dom"/>
</dbReference>
<dbReference type="PANTHER" id="PTHR11071">
    <property type="entry name" value="PEPTIDYL-PROLYL CIS-TRANS ISOMERASE"/>
    <property type="match status" value="1"/>
</dbReference>
<dbReference type="PANTHER" id="PTHR11071:SF561">
    <property type="entry name" value="PEPTIDYL-PROLYL CIS-TRANS ISOMERASE D-RELATED"/>
    <property type="match status" value="1"/>
</dbReference>
<dbReference type="Pfam" id="PF00160">
    <property type="entry name" value="Pro_isomerase"/>
    <property type="match status" value="1"/>
</dbReference>
<dbReference type="PIRSF" id="PIRSF001467">
    <property type="entry name" value="Peptidylpro_ismrse"/>
    <property type="match status" value="1"/>
</dbReference>
<dbReference type="PRINTS" id="PR00153">
    <property type="entry name" value="CSAPPISMRASE"/>
</dbReference>
<dbReference type="SUPFAM" id="SSF50891">
    <property type="entry name" value="Cyclophilin-like"/>
    <property type="match status" value="1"/>
</dbReference>
<dbReference type="PROSITE" id="PS00170">
    <property type="entry name" value="CSA_PPIASE_1"/>
    <property type="match status" value="1"/>
</dbReference>
<dbReference type="PROSITE" id="PS50072">
    <property type="entry name" value="CSA_PPIASE_2"/>
    <property type="match status" value="1"/>
</dbReference>
<accession>P0CP83</accession>
<accession>Q55L87</accession>
<accession>Q5KA96</accession>
<gene>
    <name type="primary">CYP3</name>
    <name type="ordered locus">CNBJ0970</name>
</gene>
<proteinExistence type="inferred from homology"/>
<protein>
    <recommendedName>
        <fullName>Peptidyl-prolyl cis-trans isomerase H</fullName>
        <shortName>PPIase H</shortName>
        <ecNumber>5.2.1.8</ecNumber>
    </recommendedName>
    <alternativeName>
        <fullName>Rotamase H</fullName>
    </alternativeName>
</protein>
<keyword id="KW-0413">Isomerase</keyword>
<keyword id="KW-0539">Nucleus</keyword>
<keyword id="KW-0697">Rotamase</keyword>
<feature type="chain" id="PRO_0000410201" description="Peptidyl-prolyl cis-trans isomerase H">
    <location>
        <begin position="1"/>
        <end position="179"/>
    </location>
</feature>
<feature type="domain" description="PPIase cyclophilin-type" evidence="2">
    <location>
        <begin position="16"/>
        <end position="178"/>
    </location>
</feature>